<comment type="function">
    <text evidence="1">This b-type cytochrome is tightly associated with the reaction center of photosystem II (PSII). PSII is a light-driven water:plastoquinone oxidoreductase that uses light energy to abstract electrons from H(2)O, generating O(2) and a proton gradient subsequently used for ATP formation. It consists of a core antenna complex that captures photons, and an electron transfer chain that converts photonic excitation into a charge separation.</text>
</comment>
<comment type="cofactor">
    <cofactor evidence="1">
        <name>heme b</name>
        <dbReference type="ChEBI" id="CHEBI:60344"/>
    </cofactor>
    <text evidence="1">With its partner (PsbF) binds heme. PSII binds additional chlorophylls, carotenoids and specific lipids.</text>
</comment>
<comment type="subunit">
    <text evidence="1">Heterodimer of an alpha subunit and a beta subunit. PSII is composed of 1 copy each of membrane proteins PsbA, PsbB, PsbC, PsbD, PsbE, PsbF, PsbH, PsbI, PsbJ, PsbK, PsbL, PsbM, PsbT, PsbX, PsbY, PsbZ, Psb30/Ycf12, at least 3 peripheral proteins of the oxygen-evolving complex and a large number of cofactors. It forms dimeric complexes.</text>
</comment>
<comment type="subcellular location">
    <subcellularLocation>
        <location evidence="1">Plastid</location>
        <location evidence="1">Chloroplast thylakoid membrane</location>
        <topology evidence="1">Single-pass membrane protein</topology>
    </subcellularLocation>
</comment>
<comment type="similarity">
    <text evidence="1">Belongs to the PsbE/PsbF family.</text>
</comment>
<dbReference type="EMBL" id="AY835431">
    <property type="protein sequence ID" value="AAV80667.1"/>
    <property type="molecule type" value="Genomic_DNA"/>
</dbReference>
<dbReference type="RefSeq" id="YP_636245.1">
    <property type="nucleotide sequence ID" value="NC_008114.1"/>
</dbReference>
<dbReference type="SMR" id="Q3ZJ22"/>
<dbReference type="GeneID" id="4108711"/>
<dbReference type="GO" id="GO:0009535">
    <property type="term" value="C:chloroplast thylakoid membrane"/>
    <property type="evidence" value="ECO:0007669"/>
    <property type="project" value="UniProtKB-SubCell"/>
</dbReference>
<dbReference type="GO" id="GO:0009539">
    <property type="term" value="C:photosystem II reaction center"/>
    <property type="evidence" value="ECO:0007669"/>
    <property type="project" value="InterPro"/>
</dbReference>
<dbReference type="GO" id="GO:0009055">
    <property type="term" value="F:electron transfer activity"/>
    <property type="evidence" value="ECO:0007669"/>
    <property type="project" value="UniProtKB-UniRule"/>
</dbReference>
<dbReference type="GO" id="GO:0020037">
    <property type="term" value="F:heme binding"/>
    <property type="evidence" value="ECO:0007669"/>
    <property type="project" value="InterPro"/>
</dbReference>
<dbReference type="GO" id="GO:0005506">
    <property type="term" value="F:iron ion binding"/>
    <property type="evidence" value="ECO:0007669"/>
    <property type="project" value="UniProtKB-UniRule"/>
</dbReference>
<dbReference type="GO" id="GO:0009767">
    <property type="term" value="P:photosynthetic electron transport chain"/>
    <property type="evidence" value="ECO:0007669"/>
    <property type="project" value="InterPro"/>
</dbReference>
<dbReference type="Gene3D" id="1.20.5.860">
    <property type="entry name" value="Photosystem II cytochrome b559, alpha subunit"/>
    <property type="match status" value="1"/>
</dbReference>
<dbReference type="HAMAP" id="MF_00642">
    <property type="entry name" value="PSII_PsbE"/>
    <property type="match status" value="1"/>
</dbReference>
<dbReference type="InterPro" id="IPR006217">
    <property type="entry name" value="PSII_cyt_b559_asu"/>
</dbReference>
<dbReference type="InterPro" id="IPR037025">
    <property type="entry name" value="PSII_cyt_b559_asu_sf"/>
</dbReference>
<dbReference type="InterPro" id="IPR006216">
    <property type="entry name" value="PSII_cyt_b559_CS"/>
</dbReference>
<dbReference type="InterPro" id="IPR013081">
    <property type="entry name" value="PSII_cyt_b559_N"/>
</dbReference>
<dbReference type="InterPro" id="IPR013082">
    <property type="entry name" value="PSII_cytb559_asu_lum"/>
</dbReference>
<dbReference type="NCBIfam" id="TIGR01332">
    <property type="entry name" value="cyt_b559_alpha"/>
    <property type="match status" value="1"/>
</dbReference>
<dbReference type="PANTHER" id="PTHR33391">
    <property type="entry name" value="CYTOCHROME B559 SUBUNIT BETA-RELATED"/>
    <property type="match status" value="1"/>
</dbReference>
<dbReference type="PANTHER" id="PTHR33391:SF9">
    <property type="entry name" value="CYTOCHROME B559 SUBUNIT BETA-RELATED"/>
    <property type="match status" value="1"/>
</dbReference>
<dbReference type="Pfam" id="PF00283">
    <property type="entry name" value="Cytochrom_B559"/>
    <property type="match status" value="1"/>
</dbReference>
<dbReference type="Pfam" id="PF00284">
    <property type="entry name" value="Cytochrom_B559a"/>
    <property type="match status" value="1"/>
</dbReference>
<dbReference type="PIRSF" id="PIRSF000036">
    <property type="entry name" value="PsbE"/>
    <property type="match status" value="1"/>
</dbReference>
<dbReference type="SUPFAM" id="SSF161045">
    <property type="entry name" value="Cytochrome b559 subunits"/>
    <property type="match status" value="1"/>
</dbReference>
<dbReference type="PROSITE" id="PS00537">
    <property type="entry name" value="CYTOCHROME_B559"/>
    <property type="match status" value="1"/>
</dbReference>
<keyword id="KW-0150">Chloroplast</keyword>
<keyword id="KW-0249">Electron transport</keyword>
<keyword id="KW-0349">Heme</keyword>
<keyword id="KW-0408">Iron</keyword>
<keyword id="KW-0472">Membrane</keyword>
<keyword id="KW-0479">Metal-binding</keyword>
<keyword id="KW-0602">Photosynthesis</keyword>
<keyword id="KW-0604">Photosystem II</keyword>
<keyword id="KW-0934">Plastid</keyword>
<keyword id="KW-0793">Thylakoid</keyword>
<keyword id="KW-0812">Transmembrane</keyword>
<keyword id="KW-1133">Transmembrane helix</keyword>
<keyword id="KW-0813">Transport</keyword>
<reference key="1">
    <citation type="journal article" date="2005" name="Mol. Biol. Evol.">
        <title>The chloroplast genome sequence of the green alga Pseudendoclonium akinetum (Ulvophyceae) reveals unusual structural features and new insights into the branching order of chlorophyte lineages.</title>
        <authorList>
            <person name="Pombert J.-F."/>
            <person name="Otis C."/>
            <person name="Lemieux C."/>
            <person name="Turmel M."/>
        </authorList>
    </citation>
    <scope>NUCLEOTIDE SEQUENCE [LARGE SCALE GENOMIC DNA]</scope>
    <source>
        <strain>UTEX 1912</strain>
    </source>
</reference>
<evidence type="ECO:0000255" key="1">
    <source>
        <dbReference type="HAMAP-Rule" id="MF_00642"/>
    </source>
</evidence>
<feature type="chain" id="PRO_0000233208" description="Cytochrome b559 subunit alpha">
    <location>
        <begin position="1"/>
        <end position="83"/>
    </location>
</feature>
<feature type="transmembrane region" description="Helical" evidence="1">
    <location>
        <begin position="21"/>
        <end position="35"/>
    </location>
</feature>
<feature type="binding site" description="axial binding residue" evidence="1">
    <location>
        <position position="23"/>
    </location>
    <ligand>
        <name>heme</name>
        <dbReference type="ChEBI" id="CHEBI:30413"/>
        <note>ligand shared with beta subunit</note>
    </ligand>
    <ligandPart>
        <name>Fe</name>
        <dbReference type="ChEBI" id="CHEBI:18248"/>
    </ligandPart>
</feature>
<name>PSBE_TUPAK</name>
<accession>Q3ZJ22</accession>
<sequence length="83" mass="9497">MAGTTGERPFSDILTSIRYWVIHSITIPSLFIAGWLFVSTGLAYDVFGTPRPNEYFTEDRQEAPLITDRFNSLEQVKKLSNIR</sequence>
<protein>
    <recommendedName>
        <fullName evidence="1">Cytochrome b559 subunit alpha</fullName>
    </recommendedName>
    <alternativeName>
        <fullName evidence="1">PSII reaction center subunit V</fullName>
    </alternativeName>
</protein>
<proteinExistence type="inferred from homology"/>
<organism>
    <name type="scientific">Tupiella akineta</name>
    <name type="common">Green alga</name>
    <name type="synonym">Pseudendoclonium akinetum</name>
    <dbReference type="NCBI Taxonomy" id="160070"/>
    <lineage>
        <taxon>Eukaryota</taxon>
        <taxon>Viridiplantae</taxon>
        <taxon>Chlorophyta</taxon>
        <taxon>Ulvophyceae</taxon>
        <taxon>OUU clade</taxon>
        <taxon>Ulotrichales</taxon>
        <taxon>Tupiellaceae</taxon>
        <taxon>Tupiella</taxon>
    </lineage>
</organism>
<gene>
    <name evidence="1" type="primary">psbE</name>
</gene>
<geneLocation type="chloroplast"/>